<accession>B0V6U5</accession>
<comment type="function">
    <text evidence="1">Located on the platform of the 30S subunit, it bridges several disparate RNA helices of the 16S rRNA. Forms part of the Shine-Dalgarno cleft in the 70S ribosome.</text>
</comment>
<comment type="subunit">
    <text evidence="1">Part of the 30S ribosomal subunit. Interacts with proteins S7 and S18. Binds to IF-3.</text>
</comment>
<comment type="similarity">
    <text evidence="1">Belongs to the universal ribosomal protein uS11 family.</text>
</comment>
<sequence length="128" mass="13534">MAKDTRTRKKVTRTVSEGVAHIHASFNNTIVTITDRQGNALAWATSGGQGFRGSRKSTPFAAQVAAEVAGKAALDYGLKNLDVLVKGPGPGRESAVRALGAVGYKINSITDVTPIPHNGCRPPKKRRV</sequence>
<protein>
    <recommendedName>
        <fullName evidence="1">Small ribosomal subunit protein uS11</fullName>
    </recommendedName>
    <alternativeName>
        <fullName evidence="2">30S ribosomal protein S11</fullName>
    </alternativeName>
</protein>
<keyword id="KW-0687">Ribonucleoprotein</keyword>
<keyword id="KW-0689">Ribosomal protein</keyword>
<keyword id="KW-0694">RNA-binding</keyword>
<keyword id="KW-0699">rRNA-binding</keyword>
<organism>
    <name type="scientific">Acinetobacter baumannii (strain AYE)</name>
    <dbReference type="NCBI Taxonomy" id="509173"/>
    <lineage>
        <taxon>Bacteria</taxon>
        <taxon>Pseudomonadati</taxon>
        <taxon>Pseudomonadota</taxon>
        <taxon>Gammaproteobacteria</taxon>
        <taxon>Moraxellales</taxon>
        <taxon>Moraxellaceae</taxon>
        <taxon>Acinetobacter</taxon>
        <taxon>Acinetobacter calcoaceticus/baumannii complex</taxon>
    </lineage>
</organism>
<gene>
    <name evidence="1" type="primary">rpsK</name>
    <name type="ordered locus">ABAYE0431</name>
</gene>
<reference key="1">
    <citation type="journal article" date="2008" name="PLoS ONE">
        <title>Comparative analysis of Acinetobacters: three genomes for three lifestyles.</title>
        <authorList>
            <person name="Vallenet D."/>
            <person name="Nordmann P."/>
            <person name="Barbe V."/>
            <person name="Poirel L."/>
            <person name="Mangenot S."/>
            <person name="Bataille E."/>
            <person name="Dossat C."/>
            <person name="Gas S."/>
            <person name="Kreimeyer A."/>
            <person name="Lenoble P."/>
            <person name="Oztas S."/>
            <person name="Poulain J."/>
            <person name="Segurens B."/>
            <person name="Robert C."/>
            <person name="Abergel C."/>
            <person name="Claverie J.-M."/>
            <person name="Raoult D."/>
            <person name="Medigue C."/>
            <person name="Weissenbach J."/>
            <person name="Cruveiller S."/>
        </authorList>
    </citation>
    <scope>NUCLEOTIDE SEQUENCE [LARGE SCALE GENOMIC DNA]</scope>
    <source>
        <strain>AYE</strain>
    </source>
</reference>
<dbReference type="EMBL" id="CU459141">
    <property type="protein sequence ID" value="CAM85405.1"/>
    <property type="molecule type" value="Genomic_DNA"/>
</dbReference>
<dbReference type="RefSeq" id="WP_001040166.1">
    <property type="nucleotide sequence ID" value="NZ_JBDGFB010000011.1"/>
</dbReference>
<dbReference type="SMR" id="B0V6U5"/>
<dbReference type="EnsemblBacteria" id="CAM85405">
    <property type="protein sequence ID" value="CAM85405"/>
    <property type="gene ID" value="ABAYE0431"/>
</dbReference>
<dbReference type="GeneID" id="97425222"/>
<dbReference type="KEGG" id="aby:ABAYE0431"/>
<dbReference type="HOGENOM" id="CLU_072439_5_0_6"/>
<dbReference type="GO" id="GO:1990904">
    <property type="term" value="C:ribonucleoprotein complex"/>
    <property type="evidence" value="ECO:0007669"/>
    <property type="project" value="UniProtKB-KW"/>
</dbReference>
<dbReference type="GO" id="GO:0005840">
    <property type="term" value="C:ribosome"/>
    <property type="evidence" value="ECO:0007669"/>
    <property type="project" value="UniProtKB-KW"/>
</dbReference>
<dbReference type="GO" id="GO:0019843">
    <property type="term" value="F:rRNA binding"/>
    <property type="evidence" value="ECO:0007669"/>
    <property type="project" value="UniProtKB-UniRule"/>
</dbReference>
<dbReference type="GO" id="GO:0003735">
    <property type="term" value="F:structural constituent of ribosome"/>
    <property type="evidence" value="ECO:0007669"/>
    <property type="project" value="InterPro"/>
</dbReference>
<dbReference type="GO" id="GO:0006412">
    <property type="term" value="P:translation"/>
    <property type="evidence" value="ECO:0007669"/>
    <property type="project" value="UniProtKB-UniRule"/>
</dbReference>
<dbReference type="FunFam" id="3.30.420.80:FF:000001">
    <property type="entry name" value="30S ribosomal protein S11"/>
    <property type="match status" value="1"/>
</dbReference>
<dbReference type="Gene3D" id="3.30.420.80">
    <property type="entry name" value="Ribosomal protein S11"/>
    <property type="match status" value="1"/>
</dbReference>
<dbReference type="HAMAP" id="MF_01310">
    <property type="entry name" value="Ribosomal_uS11"/>
    <property type="match status" value="1"/>
</dbReference>
<dbReference type="InterPro" id="IPR001971">
    <property type="entry name" value="Ribosomal_uS11"/>
</dbReference>
<dbReference type="InterPro" id="IPR019981">
    <property type="entry name" value="Ribosomal_uS11_bac-type"/>
</dbReference>
<dbReference type="InterPro" id="IPR018102">
    <property type="entry name" value="Ribosomal_uS11_CS"/>
</dbReference>
<dbReference type="InterPro" id="IPR036967">
    <property type="entry name" value="Ribosomal_uS11_sf"/>
</dbReference>
<dbReference type="NCBIfam" id="NF003698">
    <property type="entry name" value="PRK05309.1"/>
    <property type="match status" value="1"/>
</dbReference>
<dbReference type="NCBIfam" id="TIGR03632">
    <property type="entry name" value="uS11_bact"/>
    <property type="match status" value="1"/>
</dbReference>
<dbReference type="PANTHER" id="PTHR11759">
    <property type="entry name" value="40S RIBOSOMAL PROTEIN S14/30S RIBOSOMAL PROTEIN S11"/>
    <property type="match status" value="1"/>
</dbReference>
<dbReference type="Pfam" id="PF00411">
    <property type="entry name" value="Ribosomal_S11"/>
    <property type="match status" value="1"/>
</dbReference>
<dbReference type="PIRSF" id="PIRSF002131">
    <property type="entry name" value="Ribosomal_S11"/>
    <property type="match status" value="1"/>
</dbReference>
<dbReference type="SUPFAM" id="SSF53137">
    <property type="entry name" value="Translational machinery components"/>
    <property type="match status" value="1"/>
</dbReference>
<dbReference type="PROSITE" id="PS00054">
    <property type="entry name" value="RIBOSOMAL_S11"/>
    <property type="match status" value="1"/>
</dbReference>
<feature type="chain" id="PRO_1000141044" description="Small ribosomal subunit protein uS11">
    <location>
        <begin position="1"/>
        <end position="128"/>
    </location>
</feature>
<proteinExistence type="inferred from homology"/>
<name>RS11_ACIBY</name>
<evidence type="ECO:0000255" key="1">
    <source>
        <dbReference type="HAMAP-Rule" id="MF_01310"/>
    </source>
</evidence>
<evidence type="ECO:0000305" key="2"/>